<proteinExistence type="evidence at protein level"/>
<name>MUKF_HAEDU</name>
<accession>Q7VL94</accession>
<comment type="function">
    <text evidence="1">Involved in chromosome condensation, segregation and cell cycle progression. May participate in facilitating chromosome segregation by condensation DNA from both sides of a centrally located replisome during cell division. Not required for mini-F plasmid partitioning. Probably acts via its interaction with MukB and MukE. Overexpression results in anucleate cells. It has a calcium binding activity.</text>
</comment>
<comment type="subunit">
    <text evidence="1">Interacts, and probably forms a ternary complex, with MukE and MukB via its C-terminal region. The complex formation is stimulated by calcium or magnesium. It is required for an interaction between MukE and MukB.</text>
</comment>
<comment type="subcellular location">
    <subcellularLocation>
        <location evidence="1">Cytoplasm</location>
        <location evidence="1">Nucleoid</location>
    </subcellularLocation>
    <text evidence="1">Restricted to the nucleoid region.</text>
</comment>
<comment type="similarity">
    <text evidence="1">Belongs to the MukF family.</text>
</comment>
<reference key="1">
    <citation type="submission" date="2003-06" db="EMBL/GenBank/DDBJ databases">
        <title>The complete genome sequence of Haemophilus ducreyi.</title>
        <authorList>
            <person name="Munson R.S. Jr."/>
            <person name="Ray W.C."/>
            <person name="Mahairas G."/>
            <person name="Sabo P."/>
            <person name="Mungur R."/>
            <person name="Johnson L."/>
            <person name="Nguyen D."/>
            <person name="Wang J."/>
            <person name="Forst C."/>
            <person name="Hood L."/>
        </authorList>
    </citation>
    <scope>NUCLEOTIDE SEQUENCE [LARGE SCALE GENOMIC DNA]</scope>
    <source>
        <strain>35000HP / ATCC 700724</strain>
    </source>
</reference>
<protein>
    <recommendedName>
        <fullName evidence="1">Chromosome partition protein MukF</fullName>
    </recommendedName>
</protein>
<gene>
    <name evidence="1" type="primary">mukF</name>
    <name type="ordered locus">HD_1585</name>
</gene>
<keyword id="KW-0002">3D-structure</keyword>
<keyword id="KW-0106">Calcium</keyword>
<keyword id="KW-0131">Cell cycle</keyword>
<keyword id="KW-0132">Cell division</keyword>
<keyword id="KW-0159">Chromosome partition</keyword>
<keyword id="KW-0963">Cytoplasm</keyword>
<keyword id="KW-0226">DNA condensation</keyword>
<keyword id="KW-1185">Reference proteome</keyword>
<dbReference type="EMBL" id="AE017143">
    <property type="protein sequence ID" value="AAP96365.1"/>
    <property type="molecule type" value="Genomic_DNA"/>
</dbReference>
<dbReference type="RefSeq" id="WP_010945397.1">
    <property type="nucleotide sequence ID" value="NC_002940.2"/>
</dbReference>
<dbReference type="PDB" id="3EUJ">
    <property type="method" value="X-ray"/>
    <property type="resolution" value="3.10 A"/>
    <property type="chains" value="B=292-443"/>
</dbReference>
<dbReference type="PDB" id="3EUK">
    <property type="method" value="X-ray"/>
    <property type="resolution" value="4.00 A"/>
    <property type="chains" value="E/J=292-443"/>
</dbReference>
<dbReference type="PDBsum" id="3EUJ"/>
<dbReference type="PDBsum" id="3EUK"/>
<dbReference type="SMR" id="Q7VL94"/>
<dbReference type="IntAct" id="Q7VL94">
    <property type="interactions" value="2"/>
</dbReference>
<dbReference type="STRING" id="233412.HD_1585"/>
<dbReference type="KEGG" id="hdu:HD_1585"/>
<dbReference type="eggNOG" id="COG3006">
    <property type="taxonomic scope" value="Bacteria"/>
</dbReference>
<dbReference type="HOGENOM" id="CLU_049853_0_0_6"/>
<dbReference type="OrthoDB" id="6450805at2"/>
<dbReference type="EvolutionaryTrace" id="Q7VL94"/>
<dbReference type="Proteomes" id="UP000001022">
    <property type="component" value="Chromosome"/>
</dbReference>
<dbReference type="GO" id="GO:0005737">
    <property type="term" value="C:cytoplasm"/>
    <property type="evidence" value="ECO:0007669"/>
    <property type="project" value="UniProtKB-UniRule"/>
</dbReference>
<dbReference type="GO" id="GO:0009295">
    <property type="term" value="C:nucleoid"/>
    <property type="evidence" value="ECO:0007669"/>
    <property type="project" value="UniProtKB-SubCell"/>
</dbReference>
<dbReference type="GO" id="GO:0005509">
    <property type="term" value="F:calcium ion binding"/>
    <property type="evidence" value="ECO:0007669"/>
    <property type="project" value="UniProtKB-UniRule"/>
</dbReference>
<dbReference type="GO" id="GO:0051301">
    <property type="term" value="P:cell division"/>
    <property type="evidence" value="ECO:0007669"/>
    <property type="project" value="UniProtKB-KW"/>
</dbReference>
<dbReference type="GO" id="GO:0030261">
    <property type="term" value="P:chromosome condensation"/>
    <property type="evidence" value="ECO:0007669"/>
    <property type="project" value="UniProtKB-KW"/>
</dbReference>
<dbReference type="GO" id="GO:0007059">
    <property type="term" value="P:chromosome segregation"/>
    <property type="evidence" value="ECO:0007669"/>
    <property type="project" value="UniProtKB-UniRule"/>
</dbReference>
<dbReference type="GO" id="GO:0006260">
    <property type="term" value="P:DNA replication"/>
    <property type="evidence" value="ECO:0007669"/>
    <property type="project" value="UniProtKB-UniRule"/>
</dbReference>
<dbReference type="CDD" id="cd16337">
    <property type="entry name" value="MukF_C"/>
    <property type="match status" value="1"/>
</dbReference>
<dbReference type="Gene3D" id="1.20.58.590">
    <property type="entry name" value="Chromosome partition protein MukF, middle domain"/>
    <property type="match status" value="1"/>
</dbReference>
<dbReference type="Gene3D" id="1.10.225.40">
    <property type="entry name" value="MukF, C-terminal domain"/>
    <property type="match status" value="1"/>
</dbReference>
<dbReference type="Gene3D" id="1.10.10.10">
    <property type="entry name" value="Winged helix-like DNA-binding domain superfamily/Winged helix DNA-binding domain"/>
    <property type="match status" value="1"/>
</dbReference>
<dbReference type="HAMAP" id="MF_01803">
    <property type="entry name" value="MukF"/>
    <property type="match status" value="1"/>
</dbReference>
<dbReference type="InterPro" id="IPR005582">
    <property type="entry name" value="Chromosome_partition_MukF"/>
</dbReference>
<dbReference type="InterPro" id="IPR033441">
    <property type="entry name" value="MukF_C"/>
</dbReference>
<dbReference type="InterPro" id="IPR038198">
    <property type="entry name" value="MukF_C_sf"/>
</dbReference>
<dbReference type="InterPro" id="IPR033440">
    <property type="entry name" value="MukF_M"/>
</dbReference>
<dbReference type="InterPro" id="IPR036141">
    <property type="entry name" value="MukF_M_sp"/>
</dbReference>
<dbReference type="InterPro" id="IPR033439">
    <property type="entry name" value="MukF_WHTH"/>
</dbReference>
<dbReference type="InterPro" id="IPR036388">
    <property type="entry name" value="WH-like_DNA-bd_sf"/>
</dbReference>
<dbReference type="InterPro" id="IPR036390">
    <property type="entry name" value="WH_DNA-bd_sf"/>
</dbReference>
<dbReference type="NCBIfam" id="NF003615">
    <property type="entry name" value="PRK05260.1"/>
    <property type="match status" value="1"/>
</dbReference>
<dbReference type="Pfam" id="PF03882">
    <property type="entry name" value="KicB"/>
    <property type="match status" value="1"/>
</dbReference>
<dbReference type="Pfam" id="PF17193">
    <property type="entry name" value="MukF_C"/>
    <property type="match status" value="1"/>
</dbReference>
<dbReference type="Pfam" id="PF17192">
    <property type="entry name" value="MukF_M"/>
    <property type="match status" value="1"/>
</dbReference>
<dbReference type="PIRSF" id="PIRSF018282">
    <property type="entry name" value="MukF"/>
    <property type="match status" value="1"/>
</dbReference>
<dbReference type="SUPFAM" id="SSF140570">
    <property type="entry name" value="MukF C-terminal domain-like"/>
    <property type="match status" value="1"/>
</dbReference>
<dbReference type="SUPFAM" id="SSF46785">
    <property type="entry name" value="Winged helix' DNA-binding domain"/>
    <property type="match status" value="1"/>
</dbReference>
<evidence type="ECO:0000255" key="1">
    <source>
        <dbReference type="HAMAP-Rule" id="MF_01803"/>
    </source>
</evidence>
<evidence type="ECO:0007829" key="2">
    <source>
        <dbReference type="PDB" id="3EUJ"/>
    </source>
</evidence>
<organism>
    <name type="scientific">Haemophilus ducreyi (strain 35000HP / ATCC 700724)</name>
    <dbReference type="NCBI Taxonomy" id="233412"/>
    <lineage>
        <taxon>Bacteria</taxon>
        <taxon>Pseudomonadati</taxon>
        <taxon>Pseudomonadota</taxon>
        <taxon>Gammaproteobacteria</taxon>
        <taxon>Pasteurellales</taxon>
        <taxon>Pasteurellaceae</taxon>
        <taxon>Haemophilus</taxon>
    </lineage>
</organism>
<sequence>MQNELAQTIPELISWTKEREFSLSLPSDRLAFLLVISIYNNEQTDGELLESDLIDLFRYVSNVFEQSEASLLQRANNAINDLVKQRFLNRFSSEFTEGLAIYRVTPLGVGVSDYYVRQREFSSLRLSIQLSIVADEIQRASVAAEQGGDERYWRNNVFAPLKFSVAEIFDSIDLSQRMMDENQHQIREQIAGLLSQNWHEAIINCQQLLDETSINLRELQDTLNAAGDKLQSQLLRIQSCLISRDDLAFVDQLIVNLQNKLDRIMSWGQQAIDLWIGYDKHVHKFIRTAIDMDKNRVFGQRLRQSIQNYFSSPWLLYTAKAEALLDLRDDEAMLNEMEAVGELPMALEYESLTDVQTQIVTAIQAELAHFRDTAQPINLGAVLREQLARYPQSRHFDVARIIVDQAVKLGMASQDHQAVYPVWQPIDDFSAAVQAHLIDQYDK</sequence>
<feature type="chain" id="PRO_0000211605" description="Chromosome partition protein MukF">
    <location>
        <begin position="1"/>
        <end position="443"/>
    </location>
</feature>
<feature type="region of interest" description="Leucine-zipper">
    <location>
        <begin position="209"/>
        <end position="237"/>
    </location>
</feature>
<feature type="helix" evidence="2">
    <location>
        <begin position="357"/>
        <end position="372"/>
    </location>
</feature>
<feature type="helix" evidence="2">
    <location>
        <begin position="379"/>
        <end position="386"/>
    </location>
</feature>
<feature type="turn" evidence="2">
    <location>
        <begin position="387"/>
        <end position="389"/>
    </location>
</feature>
<feature type="helix" evidence="2">
    <location>
        <begin position="392"/>
        <end position="394"/>
    </location>
</feature>
<feature type="helix" evidence="2">
    <location>
        <begin position="395"/>
        <end position="408"/>
    </location>
</feature>
<feature type="helix" evidence="2">
    <location>
        <begin position="414"/>
        <end position="417"/>
    </location>
</feature>
<feature type="strand" evidence="2">
    <location>
        <begin position="424"/>
        <end position="426"/>
    </location>
</feature>
<feature type="turn" evidence="2">
    <location>
        <begin position="427"/>
        <end position="430"/>
    </location>
</feature>
<feature type="strand" evidence="2">
    <location>
        <begin position="431"/>
        <end position="434"/>
    </location>
</feature>